<protein>
    <recommendedName>
        <fullName evidence="1">2,3,4,5-tetrahydropyridine-2,6-dicarboxylate N-acetyltransferase</fullName>
        <ecNumber evidence="1">2.3.1.89</ecNumber>
    </recommendedName>
    <alternativeName>
        <fullName evidence="1">Tetrahydrodipicolinate N-acetyltransferase</fullName>
        <shortName evidence="1">THP acetyltransferase</shortName>
        <shortName evidence="1">Tetrahydropicolinate acetylase</shortName>
    </alternativeName>
</protein>
<organism>
    <name type="scientific">Fervidobacterium nodosum (strain ATCC 35602 / DSM 5306 / Rt17-B1)</name>
    <dbReference type="NCBI Taxonomy" id="381764"/>
    <lineage>
        <taxon>Bacteria</taxon>
        <taxon>Thermotogati</taxon>
        <taxon>Thermotogota</taxon>
        <taxon>Thermotogae</taxon>
        <taxon>Thermotogales</taxon>
        <taxon>Fervidobacteriaceae</taxon>
        <taxon>Fervidobacterium</taxon>
    </lineage>
</organism>
<proteinExistence type="inferred from homology"/>
<reference key="1">
    <citation type="submission" date="2007-07" db="EMBL/GenBank/DDBJ databases">
        <title>Complete sequence of Fervidobacterium nodosum Rt17-B1.</title>
        <authorList>
            <consortium name="US DOE Joint Genome Institute"/>
            <person name="Copeland A."/>
            <person name="Lucas S."/>
            <person name="Lapidus A."/>
            <person name="Barry K."/>
            <person name="Glavina del Rio T."/>
            <person name="Dalin E."/>
            <person name="Tice H."/>
            <person name="Pitluck S."/>
            <person name="Saunders E."/>
            <person name="Brettin T."/>
            <person name="Bruce D."/>
            <person name="Detter J.C."/>
            <person name="Han C."/>
            <person name="Schmutz J."/>
            <person name="Larimer F."/>
            <person name="Land M."/>
            <person name="Hauser L."/>
            <person name="Kyrpides N."/>
            <person name="Mikhailova N."/>
            <person name="Nelson K."/>
            <person name="Gogarten J.P."/>
            <person name="Noll K."/>
            <person name="Richardson P."/>
        </authorList>
    </citation>
    <scope>NUCLEOTIDE SEQUENCE [LARGE SCALE GENOMIC DNA]</scope>
    <source>
        <strain>ATCC 35602 / DSM 5306 / Rt17-B1</strain>
    </source>
</reference>
<feature type="chain" id="PRO_0000376658" description="2,3,4,5-tetrahydropyridine-2,6-dicarboxylate N-acetyltransferase">
    <location>
        <begin position="1"/>
        <end position="249"/>
    </location>
</feature>
<accession>A7HJ58</accession>
<sequence length="249" mass="26855">MADISNKKVSELTSEEIIQLIANSKKKTIVRVYVSGNLKALDIRDFEGYGKEFEFVGGQDFGVLFGNYEYIKEILRNNSITSFKVEYIAHNSAIPLSDISKFNARIEPGAIIREYVEIGNNAVIMMGAVINLGAIIGEGTMIDMNTVIGARARIGKYCHIGAGSVIAGVVEPPSAQPVIIEDNVVIGANAVILEGVRVGEHSVVAAGAVVVEDVPPYTVVAGVPAKVIKKVDEKTISKTQLIEELRKLR</sequence>
<gene>
    <name evidence="1" type="primary">dapH</name>
    <name type="ordered locus">Fnod_0074</name>
</gene>
<comment type="function">
    <text evidence="1">Catalyzes the transfer of an acetyl group from acetyl-CoA to tetrahydrodipicolinate.</text>
</comment>
<comment type="catalytic activity">
    <reaction evidence="1">
        <text>(S)-2,3,4,5-tetrahydrodipicolinate + acetyl-CoA + H2O = L-2-acetamido-6-oxoheptanedioate + CoA</text>
        <dbReference type="Rhea" id="RHEA:13085"/>
        <dbReference type="ChEBI" id="CHEBI:15377"/>
        <dbReference type="ChEBI" id="CHEBI:16845"/>
        <dbReference type="ChEBI" id="CHEBI:57287"/>
        <dbReference type="ChEBI" id="CHEBI:57288"/>
        <dbReference type="ChEBI" id="CHEBI:58117"/>
        <dbReference type="EC" id="2.3.1.89"/>
    </reaction>
</comment>
<comment type="pathway">
    <text evidence="1">Amino-acid biosynthesis; L-lysine biosynthesis via DAP pathway; LL-2,6-diaminopimelate from (S)-tetrahydrodipicolinate (acetylase route): step 1/3.</text>
</comment>
<comment type="similarity">
    <text evidence="1">Belongs to the transferase hexapeptide repeat family. DapH subfamily.</text>
</comment>
<evidence type="ECO:0000255" key="1">
    <source>
        <dbReference type="HAMAP-Rule" id="MF_01691"/>
    </source>
</evidence>
<dbReference type="EC" id="2.3.1.89" evidence="1"/>
<dbReference type="EMBL" id="CP000771">
    <property type="protein sequence ID" value="ABS59941.1"/>
    <property type="molecule type" value="Genomic_DNA"/>
</dbReference>
<dbReference type="SMR" id="A7HJ58"/>
<dbReference type="STRING" id="381764.Fnod_0074"/>
<dbReference type="KEGG" id="fno:Fnod_0074"/>
<dbReference type="eggNOG" id="COG2171">
    <property type="taxonomic scope" value="Bacteria"/>
</dbReference>
<dbReference type="HOGENOM" id="CLU_103751_0_0_0"/>
<dbReference type="OrthoDB" id="9788080at2"/>
<dbReference type="UniPathway" id="UPA00034">
    <property type="reaction ID" value="UER00022"/>
</dbReference>
<dbReference type="Proteomes" id="UP000002415">
    <property type="component" value="Chromosome"/>
</dbReference>
<dbReference type="GO" id="GO:0047200">
    <property type="term" value="F:tetrahydrodipicolinate N-acetyltransferase activity"/>
    <property type="evidence" value="ECO:0007669"/>
    <property type="project" value="UniProtKB-EC"/>
</dbReference>
<dbReference type="GO" id="GO:0019877">
    <property type="term" value="P:diaminopimelate biosynthetic process"/>
    <property type="evidence" value="ECO:0007669"/>
    <property type="project" value="UniProtKB-UniRule"/>
</dbReference>
<dbReference type="GO" id="GO:0009089">
    <property type="term" value="P:lysine biosynthetic process via diaminopimelate"/>
    <property type="evidence" value="ECO:0007669"/>
    <property type="project" value="UniProtKB-UniRule"/>
</dbReference>
<dbReference type="CDD" id="cd03350">
    <property type="entry name" value="LbH_THP_succinylT"/>
    <property type="match status" value="1"/>
</dbReference>
<dbReference type="Gene3D" id="2.160.10.10">
    <property type="entry name" value="Hexapeptide repeat proteins"/>
    <property type="match status" value="1"/>
</dbReference>
<dbReference type="Gene3D" id="3.30.70.250">
    <property type="entry name" value="Malonyl-CoA ACP transacylase, ACP-binding"/>
    <property type="match status" value="1"/>
</dbReference>
<dbReference type="HAMAP" id="MF_01691">
    <property type="entry name" value="DapH"/>
    <property type="match status" value="1"/>
</dbReference>
<dbReference type="InterPro" id="IPR019873">
    <property type="entry name" value="DapH"/>
</dbReference>
<dbReference type="InterPro" id="IPR013710">
    <property type="entry name" value="DapH_N"/>
</dbReference>
<dbReference type="InterPro" id="IPR001451">
    <property type="entry name" value="Hexapep"/>
</dbReference>
<dbReference type="InterPro" id="IPR018357">
    <property type="entry name" value="Hexapep_transf_CS"/>
</dbReference>
<dbReference type="InterPro" id="IPR050179">
    <property type="entry name" value="Trans_hexapeptide_repeat"/>
</dbReference>
<dbReference type="InterPro" id="IPR011004">
    <property type="entry name" value="Trimer_LpxA-like_sf"/>
</dbReference>
<dbReference type="NCBIfam" id="TIGR03532">
    <property type="entry name" value="DapD_Ac"/>
    <property type="match status" value="1"/>
</dbReference>
<dbReference type="PANTHER" id="PTHR43300:SF10">
    <property type="entry name" value="2,3,4,5-TETRAHYDROPYRIDINE-2,6-DICARBOXYLATE N-ACETYLTRANSFERASE"/>
    <property type="match status" value="1"/>
</dbReference>
<dbReference type="PANTHER" id="PTHR43300">
    <property type="entry name" value="ACETYLTRANSFERASE"/>
    <property type="match status" value="1"/>
</dbReference>
<dbReference type="Pfam" id="PF08503">
    <property type="entry name" value="DapH_N"/>
    <property type="match status" value="1"/>
</dbReference>
<dbReference type="Pfam" id="PF00132">
    <property type="entry name" value="Hexapep"/>
    <property type="match status" value="1"/>
</dbReference>
<dbReference type="Pfam" id="PF14602">
    <property type="entry name" value="Hexapep_2"/>
    <property type="match status" value="1"/>
</dbReference>
<dbReference type="SUPFAM" id="SSF51161">
    <property type="entry name" value="Trimeric LpxA-like enzymes"/>
    <property type="match status" value="1"/>
</dbReference>
<dbReference type="PROSITE" id="PS00101">
    <property type="entry name" value="HEXAPEP_TRANSFERASES"/>
    <property type="match status" value="1"/>
</dbReference>
<keyword id="KW-0012">Acyltransferase</keyword>
<keyword id="KW-0028">Amino-acid biosynthesis</keyword>
<keyword id="KW-0220">Diaminopimelate biosynthesis</keyword>
<keyword id="KW-0457">Lysine biosynthesis</keyword>
<keyword id="KW-1185">Reference proteome</keyword>
<keyword id="KW-0677">Repeat</keyword>
<keyword id="KW-0808">Transferase</keyword>
<name>DAPH_FERNB</name>